<keyword id="KW-0021">Allosteric enzyme</keyword>
<keyword id="KW-0067">ATP-binding</keyword>
<keyword id="KW-0963">Cytoplasm</keyword>
<keyword id="KW-0324">Glycolysis</keyword>
<keyword id="KW-0418">Kinase</keyword>
<keyword id="KW-0460">Magnesium</keyword>
<keyword id="KW-0479">Metal-binding</keyword>
<keyword id="KW-0547">Nucleotide-binding</keyword>
<keyword id="KW-1185">Reference proteome</keyword>
<keyword id="KW-0808">Transferase</keyword>
<organism>
    <name type="scientific">Mycoplasmopsis pulmonis (strain UAB CTIP)</name>
    <name type="common">Mycoplasma pulmonis</name>
    <dbReference type="NCBI Taxonomy" id="272635"/>
    <lineage>
        <taxon>Bacteria</taxon>
        <taxon>Bacillati</taxon>
        <taxon>Mycoplasmatota</taxon>
        <taxon>Mycoplasmoidales</taxon>
        <taxon>Metamycoplasmataceae</taxon>
        <taxon>Mycoplasmopsis</taxon>
    </lineage>
</organism>
<reference key="1">
    <citation type="journal article" date="2001" name="Nucleic Acids Res.">
        <title>The complete genome sequence of the murine respiratory pathogen Mycoplasma pulmonis.</title>
        <authorList>
            <person name="Chambaud I."/>
            <person name="Heilig R."/>
            <person name="Ferris S."/>
            <person name="Barbe V."/>
            <person name="Samson D."/>
            <person name="Galisson F."/>
            <person name="Moszer I."/>
            <person name="Dybvig K."/>
            <person name="Wroblewski H."/>
            <person name="Viari A."/>
            <person name="Rocha E.P.C."/>
            <person name="Blanchard A."/>
        </authorList>
    </citation>
    <scope>NUCLEOTIDE SEQUENCE [LARGE SCALE GENOMIC DNA]</scope>
    <source>
        <strain>UAB CTIP</strain>
    </source>
</reference>
<protein>
    <recommendedName>
        <fullName evidence="1">ATP-dependent 6-phosphofructokinase</fullName>
        <shortName evidence="1">ATP-PFK</shortName>
        <shortName evidence="1">Phosphofructokinase</shortName>
        <ecNumber evidence="1">2.7.1.11</ecNumber>
    </recommendedName>
    <alternativeName>
        <fullName evidence="1">Phosphohexokinase</fullName>
    </alternativeName>
</protein>
<name>PFKA_MYCPU</name>
<evidence type="ECO:0000255" key="1">
    <source>
        <dbReference type="HAMAP-Rule" id="MF_00339"/>
    </source>
</evidence>
<dbReference type="EC" id="2.7.1.11" evidence="1"/>
<dbReference type="EMBL" id="AL445565">
    <property type="protein sequence ID" value="CAC13774.1"/>
    <property type="molecule type" value="Genomic_DNA"/>
</dbReference>
<dbReference type="PIR" id="A99587">
    <property type="entry name" value="A99587"/>
</dbReference>
<dbReference type="RefSeq" id="WP_010925402.1">
    <property type="nucleotide sequence ID" value="NC_002771.1"/>
</dbReference>
<dbReference type="SMR" id="Q98PW8"/>
<dbReference type="STRING" id="272635.gene:17577208"/>
<dbReference type="KEGG" id="mpu:MYPU_6010"/>
<dbReference type="eggNOG" id="COG0205">
    <property type="taxonomic scope" value="Bacteria"/>
</dbReference>
<dbReference type="HOGENOM" id="CLU_020655_0_1_14"/>
<dbReference type="BioCyc" id="MPUL272635:G1GT6-611-MONOMER"/>
<dbReference type="UniPathway" id="UPA00109">
    <property type="reaction ID" value="UER00182"/>
</dbReference>
<dbReference type="Proteomes" id="UP000000528">
    <property type="component" value="Chromosome"/>
</dbReference>
<dbReference type="GO" id="GO:0005945">
    <property type="term" value="C:6-phosphofructokinase complex"/>
    <property type="evidence" value="ECO:0007669"/>
    <property type="project" value="TreeGrafter"/>
</dbReference>
<dbReference type="GO" id="GO:0003872">
    <property type="term" value="F:6-phosphofructokinase activity"/>
    <property type="evidence" value="ECO:0007669"/>
    <property type="project" value="UniProtKB-UniRule"/>
</dbReference>
<dbReference type="GO" id="GO:0016208">
    <property type="term" value="F:AMP binding"/>
    <property type="evidence" value="ECO:0007669"/>
    <property type="project" value="TreeGrafter"/>
</dbReference>
<dbReference type="GO" id="GO:0005524">
    <property type="term" value="F:ATP binding"/>
    <property type="evidence" value="ECO:0007669"/>
    <property type="project" value="UniProtKB-KW"/>
</dbReference>
<dbReference type="GO" id="GO:0070095">
    <property type="term" value="F:fructose-6-phosphate binding"/>
    <property type="evidence" value="ECO:0007669"/>
    <property type="project" value="TreeGrafter"/>
</dbReference>
<dbReference type="GO" id="GO:0042802">
    <property type="term" value="F:identical protein binding"/>
    <property type="evidence" value="ECO:0007669"/>
    <property type="project" value="TreeGrafter"/>
</dbReference>
<dbReference type="GO" id="GO:0046872">
    <property type="term" value="F:metal ion binding"/>
    <property type="evidence" value="ECO:0007669"/>
    <property type="project" value="UniProtKB-KW"/>
</dbReference>
<dbReference type="GO" id="GO:0048029">
    <property type="term" value="F:monosaccharide binding"/>
    <property type="evidence" value="ECO:0007669"/>
    <property type="project" value="TreeGrafter"/>
</dbReference>
<dbReference type="GO" id="GO:0061621">
    <property type="term" value="P:canonical glycolysis"/>
    <property type="evidence" value="ECO:0007669"/>
    <property type="project" value="TreeGrafter"/>
</dbReference>
<dbReference type="GO" id="GO:0030388">
    <property type="term" value="P:fructose 1,6-bisphosphate metabolic process"/>
    <property type="evidence" value="ECO:0007669"/>
    <property type="project" value="TreeGrafter"/>
</dbReference>
<dbReference type="GO" id="GO:0006002">
    <property type="term" value="P:fructose 6-phosphate metabolic process"/>
    <property type="evidence" value="ECO:0007669"/>
    <property type="project" value="InterPro"/>
</dbReference>
<dbReference type="FunFam" id="3.40.50.460:FF:000002">
    <property type="entry name" value="ATP-dependent 6-phosphofructokinase"/>
    <property type="match status" value="1"/>
</dbReference>
<dbReference type="Gene3D" id="3.40.50.450">
    <property type="match status" value="1"/>
</dbReference>
<dbReference type="Gene3D" id="3.40.50.460">
    <property type="entry name" value="Phosphofructokinase domain"/>
    <property type="match status" value="1"/>
</dbReference>
<dbReference type="HAMAP" id="MF_00339">
    <property type="entry name" value="Phosphofructokinase_I_B1"/>
    <property type="match status" value="1"/>
</dbReference>
<dbReference type="InterPro" id="IPR022953">
    <property type="entry name" value="ATP_PFK"/>
</dbReference>
<dbReference type="InterPro" id="IPR012003">
    <property type="entry name" value="ATP_PFK_prok-type"/>
</dbReference>
<dbReference type="InterPro" id="IPR012828">
    <property type="entry name" value="PFKA_ATP_prok"/>
</dbReference>
<dbReference type="InterPro" id="IPR015912">
    <property type="entry name" value="Phosphofructokinase_CS"/>
</dbReference>
<dbReference type="InterPro" id="IPR000023">
    <property type="entry name" value="Phosphofructokinase_dom"/>
</dbReference>
<dbReference type="InterPro" id="IPR035966">
    <property type="entry name" value="PKF_sf"/>
</dbReference>
<dbReference type="NCBIfam" id="TIGR02482">
    <property type="entry name" value="PFKA_ATP"/>
    <property type="match status" value="1"/>
</dbReference>
<dbReference type="NCBIfam" id="NF002872">
    <property type="entry name" value="PRK03202.1"/>
    <property type="match status" value="1"/>
</dbReference>
<dbReference type="PANTHER" id="PTHR13697:SF4">
    <property type="entry name" value="ATP-DEPENDENT 6-PHOSPHOFRUCTOKINASE"/>
    <property type="match status" value="1"/>
</dbReference>
<dbReference type="PANTHER" id="PTHR13697">
    <property type="entry name" value="PHOSPHOFRUCTOKINASE"/>
    <property type="match status" value="1"/>
</dbReference>
<dbReference type="Pfam" id="PF00365">
    <property type="entry name" value="PFK"/>
    <property type="match status" value="1"/>
</dbReference>
<dbReference type="PIRSF" id="PIRSF000532">
    <property type="entry name" value="ATP_PFK_prok"/>
    <property type="match status" value="1"/>
</dbReference>
<dbReference type="PRINTS" id="PR00476">
    <property type="entry name" value="PHFRCTKINASE"/>
</dbReference>
<dbReference type="SUPFAM" id="SSF53784">
    <property type="entry name" value="Phosphofructokinase"/>
    <property type="match status" value="1"/>
</dbReference>
<dbReference type="PROSITE" id="PS00433">
    <property type="entry name" value="PHOSPHOFRUCTOKINASE"/>
    <property type="match status" value="1"/>
</dbReference>
<proteinExistence type="inferred from homology"/>
<accession>Q98PW8</accession>
<feature type="chain" id="PRO_0000111966" description="ATP-dependent 6-phosphofructokinase">
    <location>
        <begin position="1"/>
        <end position="326"/>
    </location>
</feature>
<feature type="active site" description="Proton acceptor" evidence="1">
    <location>
        <position position="128"/>
    </location>
</feature>
<feature type="binding site" evidence="1">
    <location>
        <position position="12"/>
    </location>
    <ligand>
        <name>ATP</name>
        <dbReference type="ChEBI" id="CHEBI:30616"/>
    </ligand>
</feature>
<feature type="binding site" evidence="1">
    <location>
        <begin position="22"/>
        <end position="26"/>
    </location>
    <ligand>
        <name>ADP</name>
        <dbReference type="ChEBI" id="CHEBI:456216"/>
        <note>allosteric activator; ligand shared between dimeric partners</note>
    </ligand>
</feature>
<feature type="binding site" evidence="1">
    <location>
        <begin position="73"/>
        <end position="74"/>
    </location>
    <ligand>
        <name>ATP</name>
        <dbReference type="ChEBI" id="CHEBI:30616"/>
    </ligand>
</feature>
<feature type="binding site" evidence="1">
    <location>
        <begin position="103"/>
        <end position="106"/>
    </location>
    <ligand>
        <name>ATP</name>
        <dbReference type="ChEBI" id="CHEBI:30616"/>
    </ligand>
</feature>
<feature type="binding site" evidence="1">
    <location>
        <position position="104"/>
    </location>
    <ligand>
        <name>Mg(2+)</name>
        <dbReference type="ChEBI" id="CHEBI:18420"/>
        <note>catalytic</note>
    </ligand>
</feature>
<feature type="binding site" description="in other chain" evidence="1">
    <location>
        <begin position="126"/>
        <end position="128"/>
    </location>
    <ligand>
        <name>substrate</name>
        <note>ligand shared between dimeric partners</note>
    </ligand>
</feature>
<feature type="binding site" description="in other chain" evidence="1">
    <location>
        <position position="155"/>
    </location>
    <ligand>
        <name>ADP</name>
        <dbReference type="ChEBI" id="CHEBI:456216"/>
        <note>allosteric activator; ligand shared between dimeric partners</note>
    </ligand>
</feature>
<feature type="binding site" evidence="1">
    <location>
        <position position="163"/>
    </location>
    <ligand>
        <name>substrate</name>
        <note>ligand shared between dimeric partners</note>
    </ligand>
</feature>
<feature type="binding site" description="in other chain" evidence="1">
    <location>
        <begin position="170"/>
        <end position="172"/>
    </location>
    <ligand>
        <name>substrate</name>
        <note>ligand shared between dimeric partners</note>
    </ligand>
</feature>
<feature type="binding site" description="in other chain" evidence="1">
    <location>
        <begin position="186"/>
        <end position="188"/>
    </location>
    <ligand>
        <name>ADP</name>
        <dbReference type="ChEBI" id="CHEBI:456216"/>
        <note>allosteric activator; ligand shared between dimeric partners</note>
    </ligand>
</feature>
<feature type="binding site" description="in other chain" evidence="1">
    <location>
        <position position="212"/>
    </location>
    <ligand>
        <name>ADP</name>
        <dbReference type="ChEBI" id="CHEBI:456216"/>
        <note>allosteric activator; ligand shared between dimeric partners</note>
    </ligand>
</feature>
<feature type="binding site" description="in other chain" evidence="1">
    <location>
        <begin position="215"/>
        <end position="217"/>
    </location>
    <ligand>
        <name>ADP</name>
        <dbReference type="ChEBI" id="CHEBI:456216"/>
        <note>allosteric activator; ligand shared between dimeric partners</note>
    </ligand>
</feature>
<feature type="binding site" description="in other chain" evidence="1">
    <location>
        <position position="224"/>
    </location>
    <ligand>
        <name>substrate</name>
        <note>ligand shared between dimeric partners</note>
    </ligand>
</feature>
<feature type="binding site" evidence="1">
    <location>
        <position position="246"/>
    </location>
    <ligand>
        <name>substrate</name>
        <note>ligand shared between dimeric partners</note>
    </ligand>
</feature>
<feature type="binding site" description="in other chain" evidence="1">
    <location>
        <begin position="252"/>
        <end position="255"/>
    </location>
    <ligand>
        <name>substrate</name>
        <note>ligand shared between dimeric partners</note>
    </ligand>
</feature>
<gene>
    <name evidence="1" type="primary">pfkA</name>
    <name type="ordered locus">MYPU_6010</name>
</gene>
<sequence>MIKKIAILTSGGDSPGMNNAIRAIIKTARLYDIETYLVYEGFLGLYNGWIKPSEGIDEDSYINKGGTFIFSARFVEFAQEKYRQVAKENLLKLGIEALVVIGGDGSYKGAQKLHEMGIKTIALPGTIDNDITSSDFTIGYDTALNTIVEAVDKIRDTASSHKRCIMVEVMGHGASDLALYSGMATGSEIIVSNDYKLSVEEMAKIVKKQFEKPNKRSVIITVSEFVFKDLQQVAKQIEELTNITTKAVVLAHIQRGGYPSARERINATILGKHAVLRLKQGQSGIALGLIKNQVAATPILEALAMPQTRKDLLERRTKSYNDINQA</sequence>
<comment type="function">
    <text evidence="1">Catalyzes the phosphorylation of D-fructose 6-phosphate to fructose 1,6-bisphosphate by ATP, the first committing step of glycolysis.</text>
</comment>
<comment type="catalytic activity">
    <reaction evidence="1">
        <text>beta-D-fructose 6-phosphate + ATP = beta-D-fructose 1,6-bisphosphate + ADP + H(+)</text>
        <dbReference type="Rhea" id="RHEA:16109"/>
        <dbReference type="ChEBI" id="CHEBI:15378"/>
        <dbReference type="ChEBI" id="CHEBI:30616"/>
        <dbReference type="ChEBI" id="CHEBI:32966"/>
        <dbReference type="ChEBI" id="CHEBI:57634"/>
        <dbReference type="ChEBI" id="CHEBI:456216"/>
        <dbReference type="EC" id="2.7.1.11"/>
    </reaction>
</comment>
<comment type="cofactor">
    <cofactor evidence="1">
        <name>Mg(2+)</name>
        <dbReference type="ChEBI" id="CHEBI:18420"/>
    </cofactor>
</comment>
<comment type="activity regulation">
    <text evidence="1">Allosterically activated by ADP and other diphosphonucleosides, and allosterically inhibited by phosphoenolpyruvate.</text>
</comment>
<comment type="pathway">
    <text evidence="1">Carbohydrate degradation; glycolysis; D-glyceraldehyde 3-phosphate and glycerone phosphate from D-glucose: step 3/4.</text>
</comment>
<comment type="subunit">
    <text evidence="1">Homotetramer.</text>
</comment>
<comment type="subcellular location">
    <subcellularLocation>
        <location evidence="1">Cytoplasm</location>
    </subcellularLocation>
</comment>
<comment type="similarity">
    <text evidence="1">Belongs to the phosphofructokinase type A (PFKA) family. ATP-dependent PFK group I subfamily. Prokaryotic clade 'B1' sub-subfamily.</text>
</comment>